<protein>
    <recommendedName>
        <fullName>6-phosphogluconate dehydrogenase, decarboxylating</fullName>
        <ecNumber>1.1.1.44</ecNumber>
    </recommendedName>
</protein>
<proteinExistence type="evidence at protein level"/>
<organism>
    <name type="scientific">Staphylococcus aureus (strain N315)</name>
    <dbReference type="NCBI Taxonomy" id="158879"/>
    <lineage>
        <taxon>Bacteria</taxon>
        <taxon>Bacillati</taxon>
        <taxon>Bacillota</taxon>
        <taxon>Bacilli</taxon>
        <taxon>Bacillales</taxon>
        <taxon>Staphylococcaceae</taxon>
        <taxon>Staphylococcus</taxon>
    </lineage>
</organism>
<feature type="chain" id="PRO_0000090053" description="6-phosphogluconate dehydrogenase, decarboxylating">
    <location>
        <begin position="1"/>
        <end position="468"/>
    </location>
</feature>
<feature type="active site" description="Proton acceptor" evidence="1">
    <location>
        <position position="182"/>
    </location>
</feature>
<feature type="active site" description="Proton donor" evidence="1">
    <location>
        <position position="189"/>
    </location>
</feature>
<feature type="binding site" evidence="1">
    <location>
        <begin position="9"/>
        <end position="14"/>
    </location>
    <ligand>
        <name>NADP(+)</name>
        <dbReference type="ChEBI" id="CHEBI:58349"/>
    </ligand>
</feature>
<feature type="binding site" evidence="1">
    <location>
        <begin position="32"/>
        <end position="34"/>
    </location>
    <ligand>
        <name>NADP(+)</name>
        <dbReference type="ChEBI" id="CHEBI:58349"/>
    </ligand>
</feature>
<feature type="binding site" evidence="1">
    <location>
        <begin position="73"/>
        <end position="75"/>
    </location>
    <ligand>
        <name>NADP(+)</name>
        <dbReference type="ChEBI" id="CHEBI:58349"/>
    </ligand>
</feature>
<feature type="binding site" evidence="1">
    <location>
        <position position="101"/>
    </location>
    <ligand>
        <name>NADP(+)</name>
        <dbReference type="ChEBI" id="CHEBI:58349"/>
    </ligand>
</feature>
<feature type="binding site" description="in other chain" evidence="1">
    <location>
        <position position="101"/>
    </location>
    <ligand>
        <name>substrate</name>
        <note>ligand shared between dimeric partners</note>
    </ligand>
</feature>
<feature type="binding site" description="in other chain" evidence="1">
    <location>
        <begin position="127"/>
        <end position="129"/>
    </location>
    <ligand>
        <name>substrate</name>
        <note>ligand shared between dimeric partners</note>
    </ligand>
</feature>
<feature type="binding site" description="in other chain" evidence="1">
    <location>
        <begin position="185"/>
        <end position="186"/>
    </location>
    <ligand>
        <name>substrate</name>
        <note>ligand shared between dimeric partners</note>
    </ligand>
</feature>
<feature type="binding site" description="in other chain" evidence="1">
    <location>
        <position position="190"/>
    </location>
    <ligand>
        <name>substrate</name>
        <note>ligand shared between dimeric partners</note>
    </ligand>
</feature>
<feature type="binding site" description="in other chain" evidence="1">
    <location>
        <position position="259"/>
    </location>
    <ligand>
        <name>substrate</name>
        <note>ligand shared between dimeric partners</note>
    </ligand>
</feature>
<feature type="binding site" description="in other chain" evidence="1">
    <location>
        <position position="286"/>
    </location>
    <ligand>
        <name>substrate</name>
        <note>ligand shared between dimeric partners</note>
    </ligand>
</feature>
<feature type="binding site" evidence="1">
    <location>
        <position position="444"/>
    </location>
    <ligand>
        <name>substrate</name>
        <note>ligand shared between dimeric partners</note>
    </ligand>
</feature>
<feature type="binding site" evidence="1">
    <location>
        <position position="450"/>
    </location>
    <ligand>
        <name>substrate</name>
        <note>ligand shared between dimeric partners</note>
    </ligand>
</feature>
<gene>
    <name type="primary">gnd</name>
    <name type="ordered locus">SA1342</name>
</gene>
<accession>P63334</accession>
<accession>Q99TY2</accession>
<keyword id="KW-0311">Gluconate utilization</keyword>
<keyword id="KW-0521">NADP</keyword>
<keyword id="KW-0560">Oxidoreductase</keyword>
<keyword id="KW-0570">Pentose shunt</keyword>
<evidence type="ECO:0000250" key="1"/>
<evidence type="ECO:0000305" key="2"/>
<name>6PGD_STAAN</name>
<reference key="1">
    <citation type="journal article" date="2001" name="Lancet">
        <title>Whole genome sequencing of meticillin-resistant Staphylococcus aureus.</title>
        <authorList>
            <person name="Kuroda M."/>
            <person name="Ohta T."/>
            <person name="Uchiyama I."/>
            <person name="Baba T."/>
            <person name="Yuzawa H."/>
            <person name="Kobayashi I."/>
            <person name="Cui L."/>
            <person name="Oguchi A."/>
            <person name="Aoki K."/>
            <person name="Nagai Y."/>
            <person name="Lian J.-Q."/>
            <person name="Ito T."/>
            <person name="Kanamori M."/>
            <person name="Matsumaru H."/>
            <person name="Maruyama A."/>
            <person name="Murakami H."/>
            <person name="Hosoyama A."/>
            <person name="Mizutani-Ui Y."/>
            <person name="Takahashi N.K."/>
            <person name="Sawano T."/>
            <person name="Inoue R."/>
            <person name="Kaito C."/>
            <person name="Sekimizu K."/>
            <person name="Hirakawa H."/>
            <person name="Kuhara S."/>
            <person name="Goto S."/>
            <person name="Yabuzaki J."/>
            <person name="Kanehisa M."/>
            <person name="Yamashita A."/>
            <person name="Oshima K."/>
            <person name="Furuya K."/>
            <person name="Yoshino C."/>
            <person name="Shiba T."/>
            <person name="Hattori M."/>
            <person name="Ogasawara N."/>
            <person name="Hayashi H."/>
            <person name="Hiramatsu K."/>
        </authorList>
    </citation>
    <scope>NUCLEOTIDE SEQUENCE [LARGE SCALE GENOMIC DNA]</scope>
    <source>
        <strain>N315</strain>
    </source>
</reference>
<reference key="2">
    <citation type="journal article" date="2005" name="J. Microbiol. Methods">
        <title>Correlation of proteomic and transcriptomic profiles of Staphylococcus aureus during the post-exponential phase of growth.</title>
        <authorList>
            <person name="Scherl A."/>
            <person name="Francois P."/>
            <person name="Bento M."/>
            <person name="Deshusses J.M."/>
            <person name="Charbonnier Y."/>
            <person name="Converset V."/>
            <person name="Huyghe A."/>
            <person name="Walter N."/>
            <person name="Hoogland C."/>
            <person name="Appel R.D."/>
            <person name="Sanchez J.-C."/>
            <person name="Zimmermann-Ivol C.G."/>
            <person name="Corthals G.L."/>
            <person name="Hochstrasser D.F."/>
            <person name="Schrenzel J."/>
        </authorList>
    </citation>
    <scope>IDENTIFICATION BY MASS SPECTROMETRY</scope>
    <source>
        <strain>N315</strain>
    </source>
</reference>
<reference key="3">
    <citation type="submission" date="2007-10" db="UniProtKB">
        <title>Shotgun proteomic analysis of total and membrane protein extracts of S. aureus strain N315.</title>
        <authorList>
            <person name="Vaezzadeh A.R."/>
            <person name="Deshusses J."/>
            <person name="Lescuyer P."/>
            <person name="Hochstrasser D.F."/>
        </authorList>
    </citation>
    <scope>IDENTIFICATION BY MASS SPECTROMETRY [LARGE SCALE ANALYSIS]</scope>
    <source>
        <strain>N315</strain>
    </source>
</reference>
<sequence length="468" mass="51803">MTQQIGVIGLAVMGKNLAWNIESRGYSVSVFNRSSEKTDLMVEESKGKNIHPTYSLEEFVNSLEKPRKILLMVQAGKATDATIDSLLPLLDDGDILIDGGNTNYQDTIRRNKALAQSAINFIGMGVSGGEIGALTGPSLMPGGQEEAYNKVADILDAIAAKAKDGASCVTYIGPNGAGHYVKMVHNGIEYADMQLIAESYAMMKELLGMSHEDIAQTFKDWNAGELESYLIEITGDIFMKLDENKEALVEKILDTAGQKGTGKWTSINALELGIPLTIITESVFARFISSIKEERVNASKELNGPKASFDGDKKDFLEKIRKALYMSKICSYAQGFAQMRKASEDNEWNLKLGDLAMIWREGCIIRAQFLQKIKDAYDNNPGLQNLLLDPYFKNIVTEYQDALRDVVATGVQNGVPTPGFSSSINYYDSYRAADLPANLIQAQRDYFGAHTYERKDKEGVFHTQWIEE</sequence>
<dbReference type="EC" id="1.1.1.44"/>
<dbReference type="EMBL" id="BA000018">
    <property type="protein sequence ID" value="BAB42604.1"/>
    <property type="molecule type" value="Genomic_DNA"/>
</dbReference>
<dbReference type="PIR" id="G89930">
    <property type="entry name" value="G89930"/>
</dbReference>
<dbReference type="SMR" id="P63334"/>
<dbReference type="EnsemblBacteria" id="BAB42604">
    <property type="protein sequence ID" value="BAB42604"/>
    <property type="gene ID" value="BAB42604"/>
</dbReference>
<dbReference type="KEGG" id="sau:SA1342"/>
<dbReference type="HOGENOM" id="CLU_024540_4_2_9"/>
<dbReference type="UniPathway" id="UPA00115">
    <property type="reaction ID" value="UER00410"/>
</dbReference>
<dbReference type="GO" id="GO:0050661">
    <property type="term" value="F:NADP binding"/>
    <property type="evidence" value="ECO:0007669"/>
    <property type="project" value="InterPro"/>
</dbReference>
<dbReference type="GO" id="GO:0004616">
    <property type="term" value="F:phosphogluconate dehydrogenase (decarboxylating) activity"/>
    <property type="evidence" value="ECO:0007669"/>
    <property type="project" value="UniProtKB-EC"/>
</dbReference>
<dbReference type="GO" id="GO:0019521">
    <property type="term" value="P:D-gluconate metabolic process"/>
    <property type="evidence" value="ECO:0007669"/>
    <property type="project" value="UniProtKB-KW"/>
</dbReference>
<dbReference type="GO" id="GO:0016054">
    <property type="term" value="P:organic acid catabolic process"/>
    <property type="evidence" value="ECO:0007669"/>
    <property type="project" value="UniProtKB-ARBA"/>
</dbReference>
<dbReference type="GO" id="GO:0006098">
    <property type="term" value="P:pentose-phosphate shunt"/>
    <property type="evidence" value="ECO:0007669"/>
    <property type="project" value="UniProtKB-UniPathway"/>
</dbReference>
<dbReference type="FunFam" id="1.10.1040.10:FF:000002">
    <property type="entry name" value="6-phosphogluconate dehydrogenase, decarboxylating"/>
    <property type="match status" value="1"/>
</dbReference>
<dbReference type="FunFam" id="1.20.5.320:FF:000001">
    <property type="entry name" value="6-phosphogluconate dehydrogenase, decarboxylating"/>
    <property type="match status" value="1"/>
</dbReference>
<dbReference type="FunFam" id="3.40.50.720:FF:000007">
    <property type="entry name" value="6-phosphogluconate dehydrogenase, decarboxylating"/>
    <property type="match status" value="1"/>
</dbReference>
<dbReference type="Gene3D" id="1.20.5.320">
    <property type="entry name" value="6-Phosphogluconate Dehydrogenase, domain 3"/>
    <property type="match status" value="1"/>
</dbReference>
<dbReference type="Gene3D" id="1.10.1040.10">
    <property type="entry name" value="N-(1-d-carboxylethyl)-l-norvaline Dehydrogenase, domain 2"/>
    <property type="match status" value="1"/>
</dbReference>
<dbReference type="Gene3D" id="3.40.50.720">
    <property type="entry name" value="NAD(P)-binding Rossmann-like Domain"/>
    <property type="match status" value="1"/>
</dbReference>
<dbReference type="InterPro" id="IPR008927">
    <property type="entry name" value="6-PGluconate_DH-like_C_sf"/>
</dbReference>
<dbReference type="InterPro" id="IPR013328">
    <property type="entry name" value="6PGD_dom2"/>
</dbReference>
<dbReference type="InterPro" id="IPR006114">
    <property type="entry name" value="6PGDH_C"/>
</dbReference>
<dbReference type="InterPro" id="IPR006113">
    <property type="entry name" value="6PGDH_Gnd/GntZ"/>
</dbReference>
<dbReference type="InterPro" id="IPR006115">
    <property type="entry name" value="6PGDH_NADP-bd"/>
</dbReference>
<dbReference type="InterPro" id="IPR006184">
    <property type="entry name" value="6PGdom_BS"/>
</dbReference>
<dbReference type="InterPro" id="IPR036291">
    <property type="entry name" value="NAD(P)-bd_dom_sf"/>
</dbReference>
<dbReference type="InterPro" id="IPR006183">
    <property type="entry name" value="Pgluconate_DH"/>
</dbReference>
<dbReference type="NCBIfam" id="TIGR00873">
    <property type="entry name" value="gnd"/>
    <property type="match status" value="1"/>
</dbReference>
<dbReference type="NCBIfam" id="NF006765">
    <property type="entry name" value="PRK09287.1"/>
    <property type="match status" value="1"/>
</dbReference>
<dbReference type="PANTHER" id="PTHR11811">
    <property type="entry name" value="6-PHOSPHOGLUCONATE DEHYDROGENASE"/>
    <property type="match status" value="1"/>
</dbReference>
<dbReference type="Pfam" id="PF00393">
    <property type="entry name" value="6PGD"/>
    <property type="match status" value="1"/>
</dbReference>
<dbReference type="Pfam" id="PF03446">
    <property type="entry name" value="NAD_binding_2"/>
    <property type="match status" value="1"/>
</dbReference>
<dbReference type="PIRSF" id="PIRSF000109">
    <property type="entry name" value="6PGD"/>
    <property type="match status" value="1"/>
</dbReference>
<dbReference type="PRINTS" id="PR00076">
    <property type="entry name" value="6PGDHDRGNASE"/>
</dbReference>
<dbReference type="SMART" id="SM01350">
    <property type="entry name" value="6PGD"/>
    <property type="match status" value="1"/>
</dbReference>
<dbReference type="SUPFAM" id="SSF48179">
    <property type="entry name" value="6-phosphogluconate dehydrogenase C-terminal domain-like"/>
    <property type="match status" value="1"/>
</dbReference>
<dbReference type="SUPFAM" id="SSF51735">
    <property type="entry name" value="NAD(P)-binding Rossmann-fold domains"/>
    <property type="match status" value="1"/>
</dbReference>
<dbReference type="PROSITE" id="PS00461">
    <property type="entry name" value="6PGD"/>
    <property type="match status" value="1"/>
</dbReference>
<comment type="function">
    <text evidence="1">Catalyzes the oxidative decarboxylation of 6-phosphogluconate to ribulose 5-phosphate and CO(2), with concomitant reduction of NADP to NADPH.</text>
</comment>
<comment type="catalytic activity">
    <reaction>
        <text>6-phospho-D-gluconate + NADP(+) = D-ribulose 5-phosphate + CO2 + NADPH</text>
        <dbReference type="Rhea" id="RHEA:10116"/>
        <dbReference type="ChEBI" id="CHEBI:16526"/>
        <dbReference type="ChEBI" id="CHEBI:57783"/>
        <dbReference type="ChEBI" id="CHEBI:58121"/>
        <dbReference type="ChEBI" id="CHEBI:58349"/>
        <dbReference type="ChEBI" id="CHEBI:58759"/>
        <dbReference type="EC" id="1.1.1.44"/>
    </reaction>
</comment>
<comment type="pathway">
    <text>Carbohydrate degradation; pentose phosphate pathway; D-ribulose 5-phosphate from D-glucose 6-phosphate (oxidative stage): step 3/3.</text>
</comment>
<comment type="subunit">
    <text evidence="1">Homodimer.</text>
</comment>
<comment type="similarity">
    <text evidence="2">Belongs to the 6-phosphogluconate dehydrogenase family.</text>
</comment>